<proteinExistence type="inferred from homology"/>
<accession>C0RG54</accession>
<dbReference type="EC" id="4.2.1.59" evidence="1"/>
<dbReference type="EC" id="5.3.3.14" evidence="1"/>
<dbReference type="EMBL" id="CP001488">
    <property type="protein sequence ID" value="ACO01876.1"/>
    <property type="molecule type" value="Genomic_DNA"/>
</dbReference>
<dbReference type="RefSeq" id="WP_002968051.1">
    <property type="nucleotide sequence ID" value="NC_012441.1"/>
</dbReference>
<dbReference type="SMR" id="C0RG54"/>
<dbReference type="GeneID" id="97534574"/>
<dbReference type="KEGG" id="bmi:BMEA_A2233"/>
<dbReference type="HOGENOM" id="CLU_097925_0_0_5"/>
<dbReference type="UniPathway" id="UPA00094"/>
<dbReference type="Proteomes" id="UP000001748">
    <property type="component" value="Chromosome I"/>
</dbReference>
<dbReference type="GO" id="GO:0005737">
    <property type="term" value="C:cytoplasm"/>
    <property type="evidence" value="ECO:0007669"/>
    <property type="project" value="UniProtKB-SubCell"/>
</dbReference>
<dbReference type="GO" id="GO:0019171">
    <property type="term" value="F:(3R)-hydroxyacyl-[acyl-carrier-protein] dehydratase activity"/>
    <property type="evidence" value="ECO:0007669"/>
    <property type="project" value="UniProtKB-UniRule"/>
</dbReference>
<dbReference type="GO" id="GO:0034017">
    <property type="term" value="F:trans-2-decenoyl-acyl-carrier-protein isomerase activity"/>
    <property type="evidence" value="ECO:0007669"/>
    <property type="project" value="UniProtKB-UniRule"/>
</dbReference>
<dbReference type="GO" id="GO:0006636">
    <property type="term" value="P:unsaturated fatty acid biosynthetic process"/>
    <property type="evidence" value="ECO:0007669"/>
    <property type="project" value="UniProtKB-UniRule"/>
</dbReference>
<dbReference type="CDD" id="cd01287">
    <property type="entry name" value="FabA"/>
    <property type="match status" value="1"/>
</dbReference>
<dbReference type="Gene3D" id="3.10.129.10">
    <property type="entry name" value="Hotdog Thioesterase"/>
    <property type="match status" value="1"/>
</dbReference>
<dbReference type="HAMAP" id="MF_00405">
    <property type="entry name" value="FabA"/>
    <property type="match status" value="1"/>
</dbReference>
<dbReference type="InterPro" id="IPR010083">
    <property type="entry name" value="FabA"/>
</dbReference>
<dbReference type="InterPro" id="IPR013114">
    <property type="entry name" value="FabA_FabZ"/>
</dbReference>
<dbReference type="InterPro" id="IPR029069">
    <property type="entry name" value="HotDog_dom_sf"/>
</dbReference>
<dbReference type="NCBIfam" id="TIGR01749">
    <property type="entry name" value="fabA"/>
    <property type="match status" value="1"/>
</dbReference>
<dbReference type="NCBIfam" id="NF003509">
    <property type="entry name" value="PRK05174.1"/>
    <property type="match status" value="1"/>
</dbReference>
<dbReference type="PANTHER" id="PTHR30272">
    <property type="entry name" value="3-HYDROXYACYL-[ACYL-CARRIER-PROTEIN] DEHYDRATASE"/>
    <property type="match status" value="1"/>
</dbReference>
<dbReference type="PANTHER" id="PTHR30272:SF8">
    <property type="entry name" value="3-HYDROXYDECANOYL-[ACYL-CARRIER-PROTEIN] DEHYDRATASE"/>
    <property type="match status" value="1"/>
</dbReference>
<dbReference type="Pfam" id="PF07977">
    <property type="entry name" value="FabA"/>
    <property type="match status" value="1"/>
</dbReference>
<dbReference type="SUPFAM" id="SSF54637">
    <property type="entry name" value="Thioesterase/thiol ester dehydrase-isomerase"/>
    <property type="match status" value="1"/>
</dbReference>
<name>FABA_BRUMB</name>
<organism>
    <name type="scientific">Brucella melitensis biotype 2 (strain ATCC 23457)</name>
    <dbReference type="NCBI Taxonomy" id="546272"/>
    <lineage>
        <taxon>Bacteria</taxon>
        <taxon>Pseudomonadati</taxon>
        <taxon>Pseudomonadota</taxon>
        <taxon>Alphaproteobacteria</taxon>
        <taxon>Hyphomicrobiales</taxon>
        <taxon>Brucellaceae</taxon>
        <taxon>Brucella/Ochrobactrum group</taxon>
        <taxon>Brucella</taxon>
    </lineage>
</organism>
<reference key="1">
    <citation type="submission" date="2009-03" db="EMBL/GenBank/DDBJ databases">
        <title>Brucella melitensis ATCC 23457 whole genome shotgun sequencing project.</title>
        <authorList>
            <person name="Setubal J.C."/>
            <person name="Boyle S."/>
            <person name="Crasta O.R."/>
            <person name="Gillespie J.J."/>
            <person name="Kenyon R.W."/>
            <person name="Lu J."/>
            <person name="Mane S."/>
            <person name="Nagrani S."/>
            <person name="Shallom J.M."/>
            <person name="Shallom S."/>
            <person name="Shukla M."/>
            <person name="Snyder E.E."/>
            <person name="Sobral B.W."/>
            <person name="Wattam A.R."/>
            <person name="Will R."/>
            <person name="Williams K."/>
            <person name="Yoo H."/>
            <person name="Munk C."/>
            <person name="Tapia R."/>
            <person name="Han C."/>
            <person name="Detter J.C."/>
            <person name="Bruce D."/>
            <person name="Brettin T.S."/>
        </authorList>
    </citation>
    <scope>NUCLEOTIDE SEQUENCE [LARGE SCALE GENOMIC DNA]</scope>
    <source>
        <strain>ATCC 23457</strain>
    </source>
</reference>
<comment type="function">
    <text evidence="1">Necessary for the introduction of cis unsaturation into fatty acids. Catalyzes the dehydration of (3R)-3-hydroxydecanoyl-ACP to E-(2)-decenoyl-ACP and then its isomerization to Z-(3)-decenoyl-ACP. Can catalyze the dehydratase reaction for beta-hydroxyacyl-ACPs with saturated chain lengths up to 16:0, being most active on intermediate chain length.</text>
</comment>
<comment type="catalytic activity">
    <reaction evidence="1">
        <text>a (3R)-hydroxyacyl-[ACP] = a (2E)-enoyl-[ACP] + H2O</text>
        <dbReference type="Rhea" id="RHEA:13097"/>
        <dbReference type="Rhea" id="RHEA-COMP:9925"/>
        <dbReference type="Rhea" id="RHEA-COMP:9945"/>
        <dbReference type="ChEBI" id="CHEBI:15377"/>
        <dbReference type="ChEBI" id="CHEBI:78784"/>
        <dbReference type="ChEBI" id="CHEBI:78827"/>
        <dbReference type="EC" id="4.2.1.59"/>
    </reaction>
</comment>
<comment type="catalytic activity">
    <reaction evidence="1">
        <text>(3R)-hydroxydecanoyl-[ACP] = (2E)-decenoyl-[ACP] + H2O</text>
        <dbReference type="Rhea" id="RHEA:41860"/>
        <dbReference type="Rhea" id="RHEA-COMP:9638"/>
        <dbReference type="Rhea" id="RHEA-COMP:9639"/>
        <dbReference type="ChEBI" id="CHEBI:15377"/>
        <dbReference type="ChEBI" id="CHEBI:78466"/>
        <dbReference type="ChEBI" id="CHEBI:78467"/>
    </reaction>
</comment>
<comment type="catalytic activity">
    <reaction evidence="1">
        <text>(2E)-decenoyl-[ACP] = (3Z)-decenoyl-[ACP]</text>
        <dbReference type="Rhea" id="RHEA:23568"/>
        <dbReference type="Rhea" id="RHEA-COMP:9639"/>
        <dbReference type="Rhea" id="RHEA-COMP:9927"/>
        <dbReference type="ChEBI" id="CHEBI:78467"/>
        <dbReference type="ChEBI" id="CHEBI:78798"/>
        <dbReference type="EC" id="5.3.3.14"/>
    </reaction>
</comment>
<comment type="pathway">
    <text evidence="1">Lipid metabolism; fatty acid biosynthesis.</text>
</comment>
<comment type="subunit">
    <text evidence="1">Homodimer.</text>
</comment>
<comment type="subcellular location">
    <subcellularLocation>
        <location evidence="1">Cytoplasm</location>
    </subcellularLocation>
</comment>
<comment type="similarity">
    <text evidence="1">Belongs to the thioester dehydratase family. FabA subfamily.</text>
</comment>
<sequence>MAEQKSSYGYEELLACGRGEMFGPGNAQLPLPPMLMIHRITEISETGGAFDKGYIRAEYDVRPDDWYFPCHFQGNPIMPGCLGLDGMWQLTGFFLGWLGEPGRGMALSTGEVKFKGMVRPHTKLLEYGIDFKRVMRGRLVLGTADGWLKADGELIYQATDLRVGLSKEGSAQ</sequence>
<evidence type="ECO:0000255" key="1">
    <source>
        <dbReference type="HAMAP-Rule" id="MF_00405"/>
    </source>
</evidence>
<keyword id="KW-0963">Cytoplasm</keyword>
<keyword id="KW-0275">Fatty acid biosynthesis</keyword>
<keyword id="KW-0276">Fatty acid metabolism</keyword>
<keyword id="KW-0413">Isomerase</keyword>
<keyword id="KW-0444">Lipid biosynthesis</keyword>
<keyword id="KW-0443">Lipid metabolism</keyword>
<keyword id="KW-0456">Lyase</keyword>
<protein>
    <recommendedName>
        <fullName evidence="1">3-hydroxydecanoyl-[acyl-carrier-protein] dehydratase</fullName>
        <ecNumber evidence="1">4.2.1.59</ecNumber>
    </recommendedName>
    <alternativeName>
        <fullName evidence="1">3-hydroxyacyl-[acyl-carrier-protein] dehydratase FabA</fullName>
    </alternativeName>
    <alternativeName>
        <fullName evidence="1">Beta-hydroxydecanoyl thioester dehydrase</fullName>
    </alternativeName>
    <alternativeName>
        <fullName evidence="1">Trans-2-decenoyl-[acyl-carrier-protein] isomerase</fullName>
        <ecNumber evidence="1">5.3.3.14</ecNumber>
    </alternativeName>
</protein>
<feature type="chain" id="PRO_1000201173" description="3-hydroxydecanoyl-[acyl-carrier-protein] dehydratase">
    <location>
        <begin position="1"/>
        <end position="172"/>
    </location>
</feature>
<feature type="active site" evidence="1">
    <location>
        <position position="71"/>
    </location>
</feature>
<gene>
    <name evidence="1" type="primary">fabA</name>
    <name type="ordered locus">BMEA_A2233</name>
</gene>